<dbReference type="EC" id="2.1.1.177" evidence="1"/>
<dbReference type="EMBL" id="CP000726">
    <property type="protein sequence ID" value="ABS34383.1"/>
    <property type="molecule type" value="Genomic_DNA"/>
</dbReference>
<dbReference type="RefSeq" id="WP_012048404.1">
    <property type="nucleotide sequence ID" value="NC_009697.1"/>
</dbReference>
<dbReference type="SMR" id="A7FZD1"/>
<dbReference type="GeneID" id="5186910"/>
<dbReference type="KEGG" id="cba:CLB_3651"/>
<dbReference type="HOGENOM" id="CLU_100552_0_0_9"/>
<dbReference type="GO" id="GO:0005737">
    <property type="term" value="C:cytoplasm"/>
    <property type="evidence" value="ECO:0007669"/>
    <property type="project" value="UniProtKB-SubCell"/>
</dbReference>
<dbReference type="GO" id="GO:0070038">
    <property type="term" value="F:rRNA (pseudouridine-N3-)-methyltransferase activity"/>
    <property type="evidence" value="ECO:0007669"/>
    <property type="project" value="UniProtKB-UniRule"/>
</dbReference>
<dbReference type="CDD" id="cd18081">
    <property type="entry name" value="RlmH-like"/>
    <property type="match status" value="1"/>
</dbReference>
<dbReference type="Gene3D" id="3.40.1280.10">
    <property type="match status" value="1"/>
</dbReference>
<dbReference type="HAMAP" id="MF_00658">
    <property type="entry name" value="23SrRNA_methyltr_H"/>
    <property type="match status" value="1"/>
</dbReference>
<dbReference type="InterPro" id="IPR029028">
    <property type="entry name" value="Alpha/beta_knot_MTases"/>
</dbReference>
<dbReference type="InterPro" id="IPR003742">
    <property type="entry name" value="RlmH-like"/>
</dbReference>
<dbReference type="InterPro" id="IPR029026">
    <property type="entry name" value="tRNA_m1G_MTases_N"/>
</dbReference>
<dbReference type="NCBIfam" id="NF000985">
    <property type="entry name" value="PRK00103.1-3"/>
    <property type="match status" value="1"/>
</dbReference>
<dbReference type="NCBIfam" id="TIGR00246">
    <property type="entry name" value="tRNA_RlmH_YbeA"/>
    <property type="match status" value="1"/>
</dbReference>
<dbReference type="PANTHER" id="PTHR33603">
    <property type="entry name" value="METHYLTRANSFERASE"/>
    <property type="match status" value="1"/>
</dbReference>
<dbReference type="PANTHER" id="PTHR33603:SF1">
    <property type="entry name" value="RIBOSOMAL RNA LARGE SUBUNIT METHYLTRANSFERASE H"/>
    <property type="match status" value="1"/>
</dbReference>
<dbReference type="Pfam" id="PF02590">
    <property type="entry name" value="SPOUT_MTase"/>
    <property type="match status" value="1"/>
</dbReference>
<dbReference type="PIRSF" id="PIRSF004505">
    <property type="entry name" value="MT_bac"/>
    <property type="match status" value="1"/>
</dbReference>
<dbReference type="SUPFAM" id="SSF75217">
    <property type="entry name" value="alpha/beta knot"/>
    <property type="match status" value="1"/>
</dbReference>
<feature type="chain" id="PRO_1000061773" description="Ribosomal RNA large subunit methyltransferase H">
    <location>
        <begin position="1"/>
        <end position="159"/>
    </location>
</feature>
<feature type="binding site" evidence="1">
    <location>
        <position position="76"/>
    </location>
    <ligand>
        <name>S-adenosyl-L-methionine</name>
        <dbReference type="ChEBI" id="CHEBI:59789"/>
    </ligand>
</feature>
<feature type="binding site" evidence="1">
    <location>
        <position position="108"/>
    </location>
    <ligand>
        <name>S-adenosyl-L-methionine</name>
        <dbReference type="ChEBI" id="CHEBI:59789"/>
    </ligand>
</feature>
<feature type="binding site" evidence="1">
    <location>
        <begin position="127"/>
        <end position="132"/>
    </location>
    <ligand>
        <name>S-adenosyl-L-methionine</name>
        <dbReference type="ChEBI" id="CHEBI:59789"/>
    </ligand>
</feature>
<evidence type="ECO:0000255" key="1">
    <source>
        <dbReference type="HAMAP-Rule" id="MF_00658"/>
    </source>
</evidence>
<comment type="function">
    <text evidence="1">Specifically methylates the pseudouridine at position 1915 (m3Psi1915) in 23S rRNA.</text>
</comment>
<comment type="catalytic activity">
    <reaction evidence="1">
        <text>pseudouridine(1915) in 23S rRNA + S-adenosyl-L-methionine = N(3)-methylpseudouridine(1915) in 23S rRNA + S-adenosyl-L-homocysteine + H(+)</text>
        <dbReference type="Rhea" id="RHEA:42752"/>
        <dbReference type="Rhea" id="RHEA-COMP:10221"/>
        <dbReference type="Rhea" id="RHEA-COMP:10222"/>
        <dbReference type="ChEBI" id="CHEBI:15378"/>
        <dbReference type="ChEBI" id="CHEBI:57856"/>
        <dbReference type="ChEBI" id="CHEBI:59789"/>
        <dbReference type="ChEBI" id="CHEBI:65314"/>
        <dbReference type="ChEBI" id="CHEBI:74486"/>
        <dbReference type="EC" id="2.1.1.177"/>
    </reaction>
</comment>
<comment type="subunit">
    <text evidence="1">Homodimer.</text>
</comment>
<comment type="subcellular location">
    <subcellularLocation>
        <location evidence="1">Cytoplasm</location>
    </subcellularLocation>
</comment>
<comment type="similarity">
    <text evidence="1">Belongs to the RNA methyltransferase RlmH family.</text>
</comment>
<protein>
    <recommendedName>
        <fullName evidence="1">Ribosomal RNA large subunit methyltransferase H</fullName>
        <ecNumber evidence="1">2.1.1.177</ecNumber>
    </recommendedName>
    <alternativeName>
        <fullName evidence="1">23S rRNA (pseudouridine1915-N3)-methyltransferase</fullName>
    </alternativeName>
    <alternativeName>
        <fullName evidence="1">23S rRNA m3Psi1915 methyltransferase</fullName>
    </alternativeName>
    <alternativeName>
        <fullName evidence="1">rRNA (pseudouridine-N3-)-methyltransferase RlmH</fullName>
    </alternativeName>
</protein>
<proteinExistence type="inferred from homology"/>
<sequence>MNISIISVGKIKEKFLKAAIDEYSKRLSKYCKLNIIEVADEKTPDNASLKEENIIKEKEGNLILKHIKDNSFVIALDLKGKSITSEEFSDLIENCRLTGNSTIAFVIGGSLGLSQQVLSRANYKLSFSKMTFPHQLFRVMLLEQVYRAFRILCREPYHK</sequence>
<reference key="1">
    <citation type="journal article" date="2007" name="PLoS ONE">
        <title>Analysis of the neurotoxin complex genes in Clostridium botulinum A1-A4 and B1 strains: BoNT/A3, /Ba4 and /B1 clusters are located within plasmids.</title>
        <authorList>
            <person name="Smith T.J."/>
            <person name="Hill K.K."/>
            <person name="Foley B.T."/>
            <person name="Detter J.C."/>
            <person name="Munk A.C."/>
            <person name="Bruce D.C."/>
            <person name="Doggett N.A."/>
            <person name="Smith L.A."/>
            <person name="Marks J.D."/>
            <person name="Xie G."/>
            <person name="Brettin T.S."/>
        </authorList>
    </citation>
    <scope>NUCLEOTIDE SEQUENCE [LARGE SCALE GENOMIC DNA]</scope>
    <source>
        <strain>ATCC 19397 / Type A</strain>
    </source>
</reference>
<keyword id="KW-0963">Cytoplasm</keyword>
<keyword id="KW-0489">Methyltransferase</keyword>
<keyword id="KW-0698">rRNA processing</keyword>
<keyword id="KW-0949">S-adenosyl-L-methionine</keyword>
<keyword id="KW-0808">Transferase</keyword>
<accession>A7FZD1</accession>
<name>RLMH_CLOB1</name>
<gene>
    <name evidence="1" type="primary">rlmH</name>
    <name type="ordered locus">CLB_3651</name>
</gene>
<organism>
    <name type="scientific">Clostridium botulinum (strain ATCC 19397 / Type A)</name>
    <dbReference type="NCBI Taxonomy" id="441770"/>
    <lineage>
        <taxon>Bacteria</taxon>
        <taxon>Bacillati</taxon>
        <taxon>Bacillota</taxon>
        <taxon>Clostridia</taxon>
        <taxon>Eubacteriales</taxon>
        <taxon>Clostridiaceae</taxon>
        <taxon>Clostridium</taxon>
    </lineage>
</organism>